<dbReference type="EC" id="1.-.-.-" evidence="7"/>
<dbReference type="EMBL" id="AY371490">
    <property type="protein sequence ID" value="AAS66022.1"/>
    <property type="molecule type" value="Genomic_DNA"/>
</dbReference>
<dbReference type="EMBL" id="JZEE01000729">
    <property type="protein sequence ID" value="KJK60772.1"/>
    <property type="molecule type" value="Genomic_DNA"/>
</dbReference>
<dbReference type="SMR" id="Q6UEF4"/>
<dbReference type="STRING" id="1403190.Q6UEF4"/>
<dbReference type="GlyCosmos" id="Q6UEF4">
    <property type="glycosylation" value="4 sites, No reported glycans"/>
</dbReference>
<dbReference type="OrthoDB" id="1470350at2759"/>
<dbReference type="BioCyc" id="MetaCyc:MONOMER-14034"/>
<dbReference type="UniPathway" id="UPA00287"/>
<dbReference type="Proteomes" id="UP000033540">
    <property type="component" value="Unassembled WGS sequence"/>
</dbReference>
<dbReference type="GO" id="GO:0016020">
    <property type="term" value="C:membrane"/>
    <property type="evidence" value="ECO:0007669"/>
    <property type="project" value="UniProtKB-SubCell"/>
</dbReference>
<dbReference type="GO" id="GO:0020037">
    <property type="term" value="F:heme binding"/>
    <property type="evidence" value="ECO:0007669"/>
    <property type="project" value="InterPro"/>
</dbReference>
<dbReference type="GO" id="GO:0005506">
    <property type="term" value="F:iron ion binding"/>
    <property type="evidence" value="ECO:0007669"/>
    <property type="project" value="InterPro"/>
</dbReference>
<dbReference type="GO" id="GO:0004497">
    <property type="term" value="F:monooxygenase activity"/>
    <property type="evidence" value="ECO:0007669"/>
    <property type="project" value="UniProtKB-KW"/>
</dbReference>
<dbReference type="GO" id="GO:0016705">
    <property type="term" value="F:oxidoreductase activity, acting on paired donors, with incorporation or reduction of molecular oxygen"/>
    <property type="evidence" value="ECO:0007669"/>
    <property type="project" value="InterPro"/>
</dbReference>
<dbReference type="GO" id="GO:0045122">
    <property type="term" value="P:aflatoxin biosynthetic process"/>
    <property type="evidence" value="ECO:0000304"/>
    <property type="project" value="GO_Central"/>
</dbReference>
<dbReference type="CDD" id="cd11059">
    <property type="entry name" value="CYP_fungal"/>
    <property type="match status" value="1"/>
</dbReference>
<dbReference type="Gene3D" id="1.10.630.10">
    <property type="entry name" value="Cytochrome P450"/>
    <property type="match status" value="1"/>
</dbReference>
<dbReference type="InterPro" id="IPR001128">
    <property type="entry name" value="Cyt_P450"/>
</dbReference>
<dbReference type="InterPro" id="IPR017972">
    <property type="entry name" value="Cyt_P450_CS"/>
</dbReference>
<dbReference type="InterPro" id="IPR002401">
    <property type="entry name" value="Cyt_P450_E_grp-I"/>
</dbReference>
<dbReference type="InterPro" id="IPR036396">
    <property type="entry name" value="Cyt_P450_sf"/>
</dbReference>
<dbReference type="InterPro" id="IPR050121">
    <property type="entry name" value="Cytochrome_P450_monoxygenase"/>
</dbReference>
<dbReference type="PANTHER" id="PTHR24305">
    <property type="entry name" value="CYTOCHROME P450"/>
    <property type="match status" value="1"/>
</dbReference>
<dbReference type="PANTHER" id="PTHR24305:SF96">
    <property type="entry name" value="CYTOCHROME P450 MONOOXYGENASE STCB-RELATED"/>
    <property type="match status" value="1"/>
</dbReference>
<dbReference type="Pfam" id="PF00067">
    <property type="entry name" value="p450"/>
    <property type="match status" value="1"/>
</dbReference>
<dbReference type="PRINTS" id="PR00463">
    <property type="entry name" value="EP450I"/>
</dbReference>
<dbReference type="PRINTS" id="PR00385">
    <property type="entry name" value="P450"/>
</dbReference>
<dbReference type="SUPFAM" id="SSF48264">
    <property type="entry name" value="Cytochrome P450"/>
    <property type="match status" value="1"/>
</dbReference>
<dbReference type="PROSITE" id="PS00086">
    <property type="entry name" value="CYTOCHROME_P450"/>
    <property type="match status" value="1"/>
</dbReference>
<reference key="1">
    <citation type="journal article" date="2000" name="Appl. Microbiol. Biotechnol.">
        <title>Genes encoding cytochrome P450 and monooxygenase enzymes define one end of the aflatoxin pathway gene cluster in Aspergillus parasiticus.</title>
        <authorList>
            <person name="Yu J."/>
            <person name="Chang P.-K."/>
            <person name="Bhatnagar D."/>
            <person name="Cleveland T.E."/>
        </authorList>
    </citation>
    <scope>NUCLEOTIDE SEQUENCE [GENOMIC DNA]</scope>
    <source>
        <strain>ATCC 56775 / NRRL 5862 / SRRC 143 / SU-1</strain>
    </source>
</reference>
<reference key="2">
    <citation type="journal article" date="2004" name="Appl. Environ. Microbiol.">
        <title>Clustered pathway genes in aflatoxin biosynthesis.</title>
        <authorList>
            <person name="Yu J."/>
            <person name="Chang P.K."/>
            <person name="Ehrlich K.C."/>
            <person name="Cary J.W."/>
            <person name="Bhatnagar D."/>
            <person name="Cleveland T.E."/>
            <person name="Payne G.A."/>
            <person name="Linz J.E."/>
            <person name="Woloshuk C.P."/>
            <person name="Bennett J.W."/>
        </authorList>
    </citation>
    <scope>NUCLEOTIDE SEQUENCE [GENOMIC DNA]</scope>
    <scope>FUNCTION</scope>
    <scope>PATHWAY</scope>
    <scope>NOMENCLATURE</scope>
    <source>
        <strain>ATCC 56775 / NRRL 5862 / SRRC 143 / SU-1</strain>
    </source>
</reference>
<reference key="3">
    <citation type="journal article" date="2004" name="FEBS Lett.">
        <title>Completed sequence of aflatoxin pathway gene cluster in Aspergillus parasiticus.</title>
        <authorList>
            <person name="Yu J."/>
            <person name="Bhatnagar D."/>
            <person name="Cleveland T.E."/>
        </authorList>
    </citation>
    <scope>NUCLEOTIDE SEQUENCE [GENOMIC DNA]</scope>
    <scope>FUNCTION</scope>
    <scope>PATHWAY</scope>
    <source>
        <strain>ATCC 56775 / NRRL 5862 / SRRC 143 / SU-1</strain>
    </source>
</reference>
<reference key="4">
    <citation type="submission" date="2015-02" db="EMBL/GenBank/DDBJ databases">
        <title>Draft genome sequence of Aspergillus parasiticus SU-1.</title>
        <authorList>
            <person name="Yu J."/>
            <person name="Fedorova N."/>
            <person name="Yin Y."/>
            <person name="Losada L."/>
            <person name="Zafar N."/>
            <person name="Taujale R."/>
            <person name="Ehrlich K.C."/>
            <person name="Bhatnagar D."/>
            <person name="Cleveland T.E."/>
            <person name="Bennett J.W."/>
            <person name="Nierman W.C."/>
        </authorList>
    </citation>
    <scope>NUCLEOTIDE SEQUENCE [LARGE SCALE GENOMIC DNA]</scope>
    <source>
        <strain>ATCC 56775 / NRRL 5862 / SRRC 143 / SU-1</strain>
    </source>
</reference>
<keyword id="KW-0325">Glycoprotein</keyword>
<keyword id="KW-0349">Heme</keyword>
<keyword id="KW-0408">Iron</keyword>
<keyword id="KW-0472">Membrane</keyword>
<keyword id="KW-0479">Metal-binding</keyword>
<keyword id="KW-0503">Monooxygenase</keyword>
<keyword id="KW-0560">Oxidoreductase</keyword>
<keyword id="KW-1185">Reference proteome</keyword>
<keyword id="KW-0812">Transmembrane</keyword>
<keyword id="KW-1133">Transmembrane helix</keyword>
<gene>
    <name evidence="5" type="primary">aflV</name>
    <name evidence="4" type="synonym">cypX</name>
    <name type="ORF">P875_00052993</name>
</gene>
<name>AFLV_ASPPU</name>
<proteinExistence type="inferred from homology"/>
<comment type="function">
    <text evidence="7 8">Cytochrome P450 monooxygenase; part of the gene cluster that mediates the biosynthesis of aflatoxins, a group of polyketide-derived furanocoumarins, and part of the most toxic and carcinogenic compounds among the known mycotoxins (PubMed:15006741, PubMed:15094053). The four major aflatoxins produced by A.parasiticus are aflatoxin B1 (AFB1), aflatoxin B2 (AFB2), aflatoxin G1 (AFG1) and aflatoxin G2 (AFG2) (PubMed:15006741). The role of the cytochrome P450 monooxygenase aflV in aflatoxin biosynthesis has still to be characterized (PubMed:15006741). The biosynthesis of aflatoxins begins with the norsolorinic acid synthase aflC that combines a hexanoyl starter unit produced by the fatty acid synthase aflA/aflB and 7 malonyl-CoA extender units to synthesize the precursor NOR. The second step is the conversion of NOR to averantin and requires the norsolorinic acid ketoreductase aflD, which catalyzes the dehydration of norsolorinic acid to form (1'S)-averantin. The norsolorinic acid reductases aflE and aflF may also play a role in the conversion of NOR to AVN. The cytochrome P450 monooxygenase aflG then catalyzes the hydroxylation of AVN to 5'hydroxyaverantin (HAVN). The next step is performed by the 5'-hydroxyaverantin dehydrogenase aflH that transforms HAVN to 5'-oxoaverantin (OAVN) which is further converted to averufin (AVF) by aflK that plays a dual role in the pathway, as a 5'-oxoaverantin cyclase that mediates conversion of 5'-oxoaverantin, as well as a versicolorin B synthase in a later step in the pathway. The averufin oxidase aflI catalyzes the conversion of AVF to versiconal hemiacetal acetate (VHA). VHA is then the substrate for the versiconal hemiacetal acetate esterase aflJ to yield versiconal (VAL). Versicolorin B synthase aflK then converts VAL to versicolorin B (VERB) by closing the bisfuran ring of aflatoxin which is required for DNA-binding, thus giving to aflatoxin its activity as a mutagen. Then, the activity of the versicolorin B desaturase aflL leads to versicolorin A (VERA). A branch point starts from VERB since it can also be converted to dihydrodemethylsterigmatocystin (DMDHST), probably also by aflL, VERA being a precursor for aflatoxins B1 and G1, and DMDHST for aflatoxins B2 and G2. Next, the versicolorin reductase aflM and the cytochrome P450 monooxygenase aflN are involved in conversion of VERA to demethylsterigmatocystin (DMST). AflX and aflY seem also involved in this step, through probable aflX-mediated epoxide ring-opening step following versicolorin A oxidation and aflY-mediated Baeyer-Villiger oxidation required for the formation of the xanthone ring. The methyltransferase aflO then leads to the modification of DMST to sterigmatocystin (ST), and of DMDHST to dihydrosterigmatocystin (DHST). Both ST and DHST are then substrates of the O-methyltransferase aflP to yield O-methylsterigmatocystin (OMST) and dihydro-O-methylsterigmatocystin (DHOMST), respectively. Finally OMST is converted to aflatoxins B1 and G1, and DHOMST to aflatoxins B2 and G2, via the action of several enzymes including O-methylsterigmatocystin oxidoreductase aflQ, the cytochrome P450 monooxygenase aflU, but also the NADH-dependent flavin oxidoreductase nadA which is specifically required for the synthesis of AFG1 (PubMed:15006741).</text>
</comment>
<comment type="cofactor">
    <cofactor evidence="1">
        <name>heme</name>
        <dbReference type="ChEBI" id="CHEBI:30413"/>
    </cofactor>
</comment>
<comment type="pathway">
    <text evidence="7 8">Mycotoxin biosynthesis; aflatoxin biosynthesis.</text>
</comment>
<comment type="subcellular location">
    <subcellularLocation>
        <location evidence="2">Membrane</location>
        <topology evidence="2">Single-pass membrane protein</topology>
    </subcellularLocation>
</comment>
<comment type="similarity">
    <text evidence="6">Belongs to the cytochrome P450 family.</text>
</comment>
<feature type="chain" id="PRO_0000438342" description="Cytochrome P450 monooxygenase aflV">
    <location>
        <begin position="1"/>
        <end position="508"/>
    </location>
</feature>
<feature type="transmembrane region" description="Helical" evidence="2">
    <location>
        <begin position="18"/>
        <end position="38"/>
    </location>
</feature>
<feature type="binding site" description="axial binding residue" evidence="1">
    <location>
        <position position="453"/>
    </location>
    <ligand>
        <name>heme</name>
        <dbReference type="ChEBI" id="CHEBI:30413"/>
    </ligand>
    <ligandPart>
        <name>Fe</name>
        <dbReference type="ChEBI" id="CHEBI:18248"/>
    </ligandPart>
</feature>
<feature type="glycosylation site" description="N-linked (GlcNAc...) asparagine" evidence="3">
    <location>
        <position position="192"/>
    </location>
</feature>
<feature type="glycosylation site" description="N-linked (GlcNAc...) asparagine" evidence="3">
    <location>
        <position position="209"/>
    </location>
</feature>
<feature type="glycosylation site" description="N-linked (GlcNAc...) asparagine" evidence="3">
    <location>
        <position position="302"/>
    </location>
</feature>
<feature type="glycosylation site" description="N-linked (GlcNAc...) asparagine" evidence="3">
    <location>
        <position position="408"/>
    </location>
</feature>
<protein>
    <recommendedName>
        <fullName evidence="5">Cytochrome P450 monooxygenase aflV</fullName>
        <ecNumber evidence="7">1.-.-.-</ecNumber>
    </recommendedName>
    <alternativeName>
        <fullName evidence="5">Aflatoxin biosynthesis protein V</fullName>
    </alternativeName>
</protein>
<accession>Q6UEF4</accession>
<accession>A0A0F0I2B1</accession>
<organism>
    <name type="scientific">Aspergillus parasiticus (strain ATCC 56775 / NRRL 5862 / SRRC 143 / SU-1)</name>
    <dbReference type="NCBI Taxonomy" id="1403190"/>
    <lineage>
        <taxon>Eukaryota</taxon>
        <taxon>Fungi</taxon>
        <taxon>Dikarya</taxon>
        <taxon>Ascomycota</taxon>
        <taxon>Pezizomycotina</taxon>
        <taxon>Eurotiomycetes</taxon>
        <taxon>Eurotiomycetidae</taxon>
        <taxon>Eurotiales</taxon>
        <taxon>Aspergillaceae</taxon>
        <taxon>Aspergillus</taxon>
        <taxon>Aspergillus subgen. Circumdati</taxon>
    </lineage>
</organism>
<sequence length="508" mass="56332">MTNTAPRELIRAIEHVPLTWWFLAVGGAWIVSKIIKILQTAYFSPLRKIPGPWYARLTSARLAWASFANNRIYYVQSLHDKYGSIVLIGPEEVDIADPVAAKQIHRMGSGFVKAPFYKLLSPGPVDNIFNFRDAKLHSTRRKLYAKGFTLNSLRQQWEPTIRNIVALTVERIRHDAQQGEAEILGWWTLMANETVCKLTFNGGHDTVRNGTKDPFVLMLERRMGDLAHLLQHFAPPLYYLGRLLGRAVPRLHDVFFSQETMFEAGKHVVAIARSARDAEGDRNLFVKALAAGDLESKIGGLNDTEIITDAGALLLAGSDPTALSLTYLIWCVLNRPKLQAELESEVAGLQGDITDAACADLPILNAVIYESLRLYGPAPGAMPRSPPPDGATLCGYYIPPSAVVVTQNWSLHGSPKVWKDPHTFDHTRWLPGSSLSEEAKISFNPFGQGARQCLGIHLGWMQLRLATALFFRRCPGAKLAPSTTPESMVMIDSFIAGMPKARRCAIQL</sequence>
<evidence type="ECO:0000250" key="1">
    <source>
        <dbReference type="UniProtKB" id="P04798"/>
    </source>
</evidence>
<evidence type="ECO:0000255" key="2"/>
<evidence type="ECO:0000255" key="3">
    <source>
        <dbReference type="PROSITE-ProRule" id="PRU00498"/>
    </source>
</evidence>
<evidence type="ECO:0000303" key="4">
    <source>
    </source>
</evidence>
<evidence type="ECO:0000303" key="5">
    <source>
    </source>
</evidence>
<evidence type="ECO:0000305" key="6"/>
<evidence type="ECO:0000305" key="7">
    <source>
    </source>
</evidence>
<evidence type="ECO:0000305" key="8">
    <source>
    </source>
</evidence>